<sequence>MPQKINYELKNFGQYTKRRDYSKTRFSLPLTDVLAIQKESFDWFLNKAIEATLRKYYPIKSSNNKVEIKYVLGSKRIEKPLVTEQKAVKEAKQKGISYSARLYVKLQKHITETGEISFDEVILCDIPLMTSSGSFIINGFEKVIVSQLIRSPGAYFAQKTRDKQSDDLFNKVEVLPRIGSWIEIKHKVTSNLDSVKIKIDKHKSFLLTTFLSSFGFTEESMYKLFGNSETLKNTLSKDKILGKNKDIVEIRKEAQENIFRIVRRGDRITKEASQNLISNLLFNEKRYNLSKTGRYMLNRKLSLFDRIITTYLAQDIVLKNVDPTMEAKILYPKGTYITNDIAIEIQNAFKEGLIKNIDLKDYGITSDVYGKLLDTNPKLKNRMNIIGIYIFKSKKAMEKDGEKHFVIGNDPTSVENHLLISDIVAIINYYFNLNENIGRDDDPDSLINKRIVSVGELLLNQLNIGLLKMEKNTREKMSSKEISRITPKNITNNKMIQNQIKTFFNSSKLSQFMDQTNPLSEISTKRKITSLGPGGLNRDTAQFEVRDVHATHYGRICPIETPEGPNIGLILNLATYAKVDEYGFLQTPYFKVTNGIVDFSQPVYLTAHEEINRTFAQSSISIDENGKITDEQVIVKSNFDYNVVSPKEVDYIDVSSKQMTSLAASSIPFLENNDANRALMGSNMQRQAVPLLFAEAPLVATGIEADIAKFSPNNLKSTVDGEVVFVDGSQIKIKDSASEKGSIKTYQLKTFEKTNQGTVISQSPIVKMGDKVLKGDLISDSSSFKDGEMALGKNVLVGFSTWNGYNYEDAIIVSERLVKDDVFTSIHIEEQTIQFRKSKAGDDKLTADIPNASLKSRRHLDENGIVRIGSEVVTGDILVGRVSPKGDENISPAEKLLNGIFNQKISNEKDTSLKVKNGHQGTVIDVEILSRENGNVLEEEIDMMIKVYVAQKRKIKVGDKMAGRHGNKGVISRVLPVEDMPYLEDGTPLDIILNPQGVPSRMNIGQVLELHLGMAAKKLGVKFVSPVFDGVKKADIMDALEEAKLPRTGKMKVFDPTTGEKIDNEISVGVMYMFKLSHMVDDKMHSRSIGPYSLITQQPLGGKSQNGGQRFGEMETWALESYGAANILQEILTYKSDDIQGRNNLYSALTSGTKLPKPGVPESFSVLAYELRGLGIKLQIHEKEEEKQELPSQEYESLNLDQELKTASENVSESEF</sequence>
<feature type="chain" id="PRO_0000047924" description="DNA-directed RNA polymerase subunit beta">
    <location>
        <begin position="1"/>
        <end position="1216"/>
    </location>
</feature>
<feature type="region of interest" description="Disordered" evidence="2">
    <location>
        <begin position="1185"/>
        <end position="1216"/>
    </location>
</feature>
<feature type="compositionally biased region" description="Polar residues" evidence="2">
    <location>
        <begin position="1190"/>
        <end position="1216"/>
    </location>
</feature>
<comment type="function">
    <text evidence="1">DNA-dependent RNA polymerase catalyzes the transcription of DNA into RNA using the four ribonucleoside triphosphates as substrates.</text>
</comment>
<comment type="catalytic activity">
    <reaction evidence="1">
        <text>RNA(n) + a ribonucleoside 5'-triphosphate = RNA(n+1) + diphosphate</text>
        <dbReference type="Rhea" id="RHEA:21248"/>
        <dbReference type="Rhea" id="RHEA-COMP:14527"/>
        <dbReference type="Rhea" id="RHEA-COMP:17342"/>
        <dbReference type="ChEBI" id="CHEBI:33019"/>
        <dbReference type="ChEBI" id="CHEBI:61557"/>
        <dbReference type="ChEBI" id="CHEBI:140395"/>
        <dbReference type="EC" id="2.7.7.6"/>
    </reaction>
</comment>
<comment type="subunit">
    <text evidence="1">The RNAP catalytic core consists of 2 alpha, 1 beta, 1 beta' and 1 omega subunit. When a sigma factor is associated with the core the holoenzyme is formed, which can initiate transcription.</text>
</comment>
<comment type="similarity">
    <text evidence="1">Belongs to the RNA polymerase beta chain family.</text>
</comment>
<dbReference type="EC" id="2.7.7.6" evidence="1"/>
<dbReference type="EMBL" id="AL445565">
    <property type="protein sequence ID" value="CAC13719.1"/>
    <property type="molecule type" value="Genomic_DNA"/>
</dbReference>
<dbReference type="PIR" id="B90580">
    <property type="entry name" value="B90580"/>
</dbReference>
<dbReference type="RefSeq" id="WP_010925347.1">
    <property type="nucleotide sequence ID" value="NC_002771.1"/>
</dbReference>
<dbReference type="SMR" id="Q98Q23"/>
<dbReference type="STRING" id="272635.gene:17577148"/>
<dbReference type="KEGG" id="mpu:MYPU_5460"/>
<dbReference type="eggNOG" id="COG0085">
    <property type="taxonomic scope" value="Bacteria"/>
</dbReference>
<dbReference type="HOGENOM" id="CLU_000524_4_1_14"/>
<dbReference type="BioCyc" id="MPUL272635:G1GT6-554-MONOMER"/>
<dbReference type="Proteomes" id="UP000000528">
    <property type="component" value="Chromosome"/>
</dbReference>
<dbReference type="GO" id="GO:0000428">
    <property type="term" value="C:DNA-directed RNA polymerase complex"/>
    <property type="evidence" value="ECO:0007669"/>
    <property type="project" value="UniProtKB-KW"/>
</dbReference>
<dbReference type="GO" id="GO:0003677">
    <property type="term" value="F:DNA binding"/>
    <property type="evidence" value="ECO:0007669"/>
    <property type="project" value="UniProtKB-UniRule"/>
</dbReference>
<dbReference type="GO" id="GO:0003899">
    <property type="term" value="F:DNA-directed RNA polymerase activity"/>
    <property type="evidence" value="ECO:0007669"/>
    <property type="project" value="UniProtKB-UniRule"/>
</dbReference>
<dbReference type="GO" id="GO:0032549">
    <property type="term" value="F:ribonucleoside binding"/>
    <property type="evidence" value="ECO:0007669"/>
    <property type="project" value="InterPro"/>
</dbReference>
<dbReference type="GO" id="GO:0006351">
    <property type="term" value="P:DNA-templated transcription"/>
    <property type="evidence" value="ECO:0007669"/>
    <property type="project" value="UniProtKB-UniRule"/>
</dbReference>
<dbReference type="CDD" id="cd00653">
    <property type="entry name" value="RNA_pol_B_RPB2"/>
    <property type="match status" value="1"/>
</dbReference>
<dbReference type="Gene3D" id="2.40.50.100">
    <property type="match status" value="1"/>
</dbReference>
<dbReference type="Gene3D" id="2.40.50.150">
    <property type="match status" value="1"/>
</dbReference>
<dbReference type="Gene3D" id="3.90.1100.10">
    <property type="match status" value="2"/>
</dbReference>
<dbReference type="Gene3D" id="2.30.150.10">
    <property type="entry name" value="DNA-directed RNA polymerase, beta subunit, external 1 domain"/>
    <property type="match status" value="1"/>
</dbReference>
<dbReference type="Gene3D" id="2.40.270.10">
    <property type="entry name" value="DNA-directed RNA polymerase, subunit 2, domain 6"/>
    <property type="match status" value="2"/>
</dbReference>
<dbReference type="Gene3D" id="3.90.1800.10">
    <property type="entry name" value="RNA polymerase alpha subunit dimerisation domain"/>
    <property type="match status" value="1"/>
</dbReference>
<dbReference type="Gene3D" id="3.90.1110.10">
    <property type="entry name" value="RNA polymerase Rpb2, domain 2"/>
    <property type="match status" value="2"/>
</dbReference>
<dbReference type="HAMAP" id="MF_01321">
    <property type="entry name" value="RNApol_bact_RpoB"/>
    <property type="match status" value="1"/>
</dbReference>
<dbReference type="InterPro" id="IPR042107">
    <property type="entry name" value="DNA-dir_RNA_pol_bsu_ext_1_sf"/>
</dbReference>
<dbReference type="InterPro" id="IPR019462">
    <property type="entry name" value="DNA-dir_RNA_pol_bsu_external_1"/>
</dbReference>
<dbReference type="InterPro" id="IPR015712">
    <property type="entry name" value="DNA-dir_RNA_pol_su2"/>
</dbReference>
<dbReference type="InterPro" id="IPR007120">
    <property type="entry name" value="DNA-dir_RNAP_su2_dom"/>
</dbReference>
<dbReference type="InterPro" id="IPR037033">
    <property type="entry name" value="DNA-dir_RNAP_su2_hyb_sf"/>
</dbReference>
<dbReference type="InterPro" id="IPR010243">
    <property type="entry name" value="RNA_pol_bsu_bac"/>
</dbReference>
<dbReference type="InterPro" id="IPR007121">
    <property type="entry name" value="RNA_pol_bsu_CS"/>
</dbReference>
<dbReference type="InterPro" id="IPR007644">
    <property type="entry name" value="RNA_pol_bsu_protrusion"/>
</dbReference>
<dbReference type="InterPro" id="IPR037034">
    <property type="entry name" value="RNA_pol_Rpb2_2_sf"/>
</dbReference>
<dbReference type="InterPro" id="IPR007645">
    <property type="entry name" value="RNA_pol_Rpb2_3"/>
</dbReference>
<dbReference type="InterPro" id="IPR007641">
    <property type="entry name" value="RNA_pol_Rpb2_7"/>
</dbReference>
<dbReference type="InterPro" id="IPR014724">
    <property type="entry name" value="RNA_pol_RPB2_OB-fold"/>
</dbReference>
<dbReference type="NCBIfam" id="NF001616">
    <property type="entry name" value="PRK00405.1"/>
    <property type="match status" value="1"/>
</dbReference>
<dbReference type="PANTHER" id="PTHR20856">
    <property type="entry name" value="DNA-DIRECTED RNA POLYMERASE I SUBUNIT 2"/>
    <property type="match status" value="1"/>
</dbReference>
<dbReference type="Pfam" id="PF04563">
    <property type="entry name" value="RNA_pol_Rpb2_1"/>
    <property type="match status" value="1"/>
</dbReference>
<dbReference type="Pfam" id="PF04565">
    <property type="entry name" value="RNA_pol_Rpb2_3"/>
    <property type="match status" value="1"/>
</dbReference>
<dbReference type="Pfam" id="PF10385">
    <property type="entry name" value="RNA_pol_Rpb2_45"/>
    <property type="match status" value="1"/>
</dbReference>
<dbReference type="Pfam" id="PF00562">
    <property type="entry name" value="RNA_pol_Rpb2_6"/>
    <property type="match status" value="1"/>
</dbReference>
<dbReference type="Pfam" id="PF04560">
    <property type="entry name" value="RNA_pol_Rpb2_7"/>
    <property type="match status" value="1"/>
</dbReference>
<dbReference type="SUPFAM" id="SSF64484">
    <property type="entry name" value="beta and beta-prime subunits of DNA dependent RNA-polymerase"/>
    <property type="match status" value="1"/>
</dbReference>
<dbReference type="PROSITE" id="PS01166">
    <property type="entry name" value="RNA_POL_BETA"/>
    <property type="match status" value="1"/>
</dbReference>
<proteinExistence type="inferred from homology"/>
<name>RPOB_MYCPU</name>
<reference key="1">
    <citation type="journal article" date="2001" name="Nucleic Acids Res.">
        <title>The complete genome sequence of the murine respiratory pathogen Mycoplasma pulmonis.</title>
        <authorList>
            <person name="Chambaud I."/>
            <person name="Heilig R."/>
            <person name="Ferris S."/>
            <person name="Barbe V."/>
            <person name="Samson D."/>
            <person name="Galisson F."/>
            <person name="Moszer I."/>
            <person name="Dybvig K."/>
            <person name="Wroblewski H."/>
            <person name="Viari A."/>
            <person name="Rocha E.P.C."/>
            <person name="Blanchard A."/>
        </authorList>
    </citation>
    <scope>NUCLEOTIDE SEQUENCE [LARGE SCALE GENOMIC DNA]</scope>
    <source>
        <strain>UAB CTIP</strain>
    </source>
</reference>
<gene>
    <name evidence="1" type="primary">rpoB</name>
    <name type="ordered locus">MYPU_5460</name>
</gene>
<protein>
    <recommendedName>
        <fullName evidence="1">DNA-directed RNA polymerase subunit beta</fullName>
        <shortName evidence="1">RNAP subunit beta</shortName>
        <ecNumber evidence="1">2.7.7.6</ecNumber>
    </recommendedName>
    <alternativeName>
        <fullName evidence="1">RNA polymerase subunit beta</fullName>
    </alternativeName>
    <alternativeName>
        <fullName evidence="1">Transcriptase subunit beta</fullName>
    </alternativeName>
</protein>
<organism>
    <name type="scientific">Mycoplasmopsis pulmonis (strain UAB CTIP)</name>
    <name type="common">Mycoplasma pulmonis</name>
    <dbReference type="NCBI Taxonomy" id="272635"/>
    <lineage>
        <taxon>Bacteria</taxon>
        <taxon>Bacillati</taxon>
        <taxon>Mycoplasmatota</taxon>
        <taxon>Mycoplasmoidales</taxon>
        <taxon>Metamycoplasmataceae</taxon>
        <taxon>Mycoplasmopsis</taxon>
    </lineage>
</organism>
<keyword id="KW-0240">DNA-directed RNA polymerase</keyword>
<keyword id="KW-0548">Nucleotidyltransferase</keyword>
<keyword id="KW-1185">Reference proteome</keyword>
<keyword id="KW-0804">Transcription</keyword>
<keyword id="KW-0808">Transferase</keyword>
<accession>Q98Q23</accession>
<evidence type="ECO:0000255" key="1">
    <source>
        <dbReference type="HAMAP-Rule" id="MF_01321"/>
    </source>
</evidence>
<evidence type="ECO:0000256" key="2">
    <source>
        <dbReference type="SAM" id="MobiDB-lite"/>
    </source>
</evidence>